<organism>
    <name type="scientific">Campylobacter jejuni subsp. jejuni serotype O:23/36 (strain 81-176)</name>
    <dbReference type="NCBI Taxonomy" id="354242"/>
    <lineage>
        <taxon>Bacteria</taxon>
        <taxon>Pseudomonadati</taxon>
        <taxon>Campylobacterota</taxon>
        <taxon>Epsilonproteobacteria</taxon>
        <taxon>Campylobacterales</taxon>
        <taxon>Campylobacteraceae</taxon>
        <taxon>Campylobacter</taxon>
    </lineage>
</organism>
<sequence length="210" mass="22980">MKNKLDLSLYLVASQGNKSEECFLNTLENAIKGGVSIIQLREKELNAREFYKLGLKVQKLCKAYKIPFLINDRVDIALALDADGVHLGQEDLEVKLARKLLGDEKIIGLSLKKLEQLEFIQGANYLGCGAIKATPTKESSLLSLELLSQICDKSPIGVVAIGGVDKAVLDELKGINLSGVAVVRAIMDAKDAFLAAKELKRKIYENLPLK</sequence>
<accession>A1W068</accession>
<reference key="1">
    <citation type="submission" date="2006-12" db="EMBL/GenBank/DDBJ databases">
        <authorList>
            <person name="Fouts D.E."/>
            <person name="Nelson K.E."/>
            <person name="Sebastian Y."/>
        </authorList>
    </citation>
    <scope>NUCLEOTIDE SEQUENCE [LARGE SCALE GENOMIC DNA]</scope>
    <source>
        <strain>81-176</strain>
    </source>
</reference>
<evidence type="ECO:0000255" key="1">
    <source>
        <dbReference type="HAMAP-Rule" id="MF_00097"/>
    </source>
</evidence>
<dbReference type="EC" id="2.5.1.3" evidence="1"/>
<dbReference type="EMBL" id="CP000538">
    <property type="protein sequence ID" value="EAQ72046.1"/>
    <property type="molecule type" value="Genomic_DNA"/>
</dbReference>
<dbReference type="RefSeq" id="WP_002856400.1">
    <property type="nucleotide sequence ID" value="NC_008787.1"/>
</dbReference>
<dbReference type="SMR" id="A1W068"/>
<dbReference type="KEGG" id="cjj:CJJ81176_1099"/>
<dbReference type="eggNOG" id="COG0352">
    <property type="taxonomic scope" value="Bacteria"/>
</dbReference>
<dbReference type="HOGENOM" id="CLU_018272_3_2_7"/>
<dbReference type="UniPathway" id="UPA00060">
    <property type="reaction ID" value="UER00141"/>
</dbReference>
<dbReference type="Proteomes" id="UP000000646">
    <property type="component" value="Chromosome"/>
</dbReference>
<dbReference type="GO" id="GO:0005737">
    <property type="term" value="C:cytoplasm"/>
    <property type="evidence" value="ECO:0007669"/>
    <property type="project" value="TreeGrafter"/>
</dbReference>
<dbReference type="GO" id="GO:0000287">
    <property type="term" value="F:magnesium ion binding"/>
    <property type="evidence" value="ECO:0007669"/>
    <property type="project" value="UniProtKB-UniRule"/>
</dbReference>
<dbReference type="GO" id="GO:0004789">
    <property type="term" value="F:thiamine-phosphate diphosphorylase activity"/>
    <property type="evidence" value="ECO:0007669"/>
    <property type="project" value="UniProtKB-UniRule"/>
</dbReference>
<dbReference type="GO" id="GO:0009228">
    <property type="term" value="P:thiamine biosynthetic process"/>
    <property type="evidence" value="ECO:0007669"/>
    <property type="project" value="UniProtKB-KW"/>
</dbReference>
<dbReference type="GO" id="GO:0009229">
    <property type="term" value="P:thiamine diphosphate biosynthetic process"/>
    <property type="evidence" value="ECO:0007669"/>
    <property type="project" value="UniProtKB-UniRule"/>
</dbReference>
<dbReference type="CDD" id="cd00564">
    <property type="entry name" value="TMP_TenI"/>
    <property type="match status" value="1"/>
</dbReference>
<dbReference type="FunFam" id="3.20.20.70:FF:000096">
    <property type="entry name" value="Thiamine-phosphate synthase"/>
    <property type="match status" value="1"/>
</dbReference>
<dbReference type="Gene3D" id="3.20.20.70">
    <property type="entry name" value="Aldolase class I"/>
    <property type="match status" value="1"/>
</dbReference>
<dbReference type="HAMAP" id="MF_00097">
    <property type="entry name" value="TMP_synthase"/>
    <property type="match status" value="1"/>
</dbReference>
<dbReference type="InterPro" id="IPR013785">
    <property type="entry name" value="Aldolase_TIM"/>
</dbReference>
<dbReference type="InterPro" id="IPR036206">
    <property type="entry name" value="ThiamineP_synth_sf"/>
</dbReference>
<dbReference type="InterPro" id="IPR022998">
    <property type="entry name" value="ThiamineP_synth_TenI"/>
</dbReference>
<dbReference type="InterPro" id="IPR034291">
    <property type="entry name" value="TMP_synthase"/>
</dbReference>
<dbReference type="NCBIfam" id="TIGR00693">
    <property type="entry name" value="thiE"/>
    <property type="match status" value="1"/>
</dbReference>
<dbReference type="PANTHER" id="PTHR20857:SF23">
    <property type="entry name" value="THIAMINE BIOSYNTHETIC BIFUNCTIONAL ENZYME"/>
    <property type="match status" value="1"/>
</dbReference>
<dbReference type="PANTHER" id="PTHR20857">
    <property type="entry name" value="THIAMINE-PHOSPHATE PYROPHOSPHORYLASE"/>
    <property type="match status" value="1"/>
</dbReference>
<dbReference type="Pfam" id="PF02581">
    <property type="entry name" value="TMP-TENI"/>
    <property type="match status" value="1"/>
</dbReference>
<dbReference type="SUPFAM" id="SSF51391">
    <property type="entry name" value="Thiamin phosphate synthase"/>
    <property type="match status" value="1"/>
</dbReference>
<name>THIE_CAMJJ</name>
<protein>
    <recommendedName>
        <fullName evidence="1">Thiamine-phosphate synthase</fullName>
        <shortName evidence="1">TP synthase</shortName>
        <shortName evidence="1">TPS</shortName>
        <ecNumber evidence="1">2.5.1.3</ecNumber>
    </recommendedName>
    <alternativeName>
        <fullName evidence="1">Thiamine-phosphate pyrophosphorylase</fullName>
        <shortName evidence="1">TMP pyrophosphorylase</shortName>
        <shortName evidence="1">TMP-PPase</shortName>
    </alternativeName>
</protein>
<feature type="chain" id="PRO_1000008131" description="Thiamine-phosphate synthase">
    <location>
        <begin position="1"/>
        <end position="210"/>
    </location>
</feature>
<feature type="binding site" evidence="1">
    <location>
        <begin position="39"/>
        <end position="43"/>
    </location>
    <ligand>
        <name>4-amino-2-methyl-5-(diphosphooxymethyl)pyrimidine</name>
        <dbReference type="ChEBI" id="CHEBI:57841"/>
    </ligand>
</feature>
<feature type="binding site" evidence="1">
    <location>
        <position position="71"/>
    </location>
    <ligand>
        <name>4-amino-2-methyl-5-(diphosphooxymethyl)pyrimidine</name>
        <dbReference type="ChEBI" id="CHEBI:57841"/>
    </ligand>
</feature>
<feature type="binding site" evidence="1">
    <location>
        <position position="72"/>
    </location>
    <ligand>
        <name>Mg(2+)</name>
        <dbReference type="ChEBI" id="CHEBI:18420"/>
    </ligand>
</feature>
<feature type="binding site" evidence="1">
    <location>
        <position position="91"/>
    </location>
    <ligand>
        <name>Mg(2+)</name>
        <dbReference type="ChEBI" id="CHEBI:18420"/>
    </ligand>
</feature>
<feature type="binding site" evidence="1">
    <location>
        <position position="110"/>
    </location>
    <ligand>
        <name>4-amino-2-methyl-5-(diphosphooxymethyl)pyrimidine</name>
        <dbReference type="ChEBI" id="CHEBI:57841"/>
    </ligand>
</feature>
<feature type="binding site" evidence="1">
    <location>
        <begin position="134"/>
        <end position="136"/>
    </location>
    <ligand>
        <name>2-[(2R,5Z)-2-carboxy-4-methylthiazol-5(2H)-ylidene]ethyl phosphate</name>
        <dbReference type="ChEBI" id="CHEBI:62899"/>
    </ligand>
</feature>
<feature type="binding site" evidence="1">
    <location>
        <position position="137"/>
    </location>
    <ligand>
        <name>4-amino-2-methyl-5-(diphosphooxymethyl)pyrimidine</name>
        <dbReference type="ChEBI" id="CHEBI:57841"/>
    </ligand>
</feature>
<feature type="binding site" evidence="1">
    <location>
        <position position="163"/>
    </location>
    <ligand>
        <name>2-[(2R,5Z)-2-carboxy-4-methylthiazol-5(2H)-ylidene]ethyl phosphate</name>
        <dbReference type="ChEBI" id="CHEBI:62899"/>
    </ligand>
</feature>
<proteinExistence type="inferred from homology"/>
<keyword id="KW-0460">Magnesium</keyword>
<keyword id="KW-0479">Metal-binding</keyword>
<keyword id="KW-0784">Thiamine biosynthesis</keyword>
<keyword id="KW-0808">Transferase</keyword>
<gene>
    <name evidence="1" type="primary">thiE</name>
    <name type="ordered locus">CJJ81176_1099</name>
</gene>
<comment type="function">
    <text evidence="1">Condenses 4-methyl-5-(beta-hydroxyethyl)thiazole monophosphate (THZ-P) and 2-methyl-4-amino-5-hydroxymethyl pyrimidine pyrophosphate (HMP-PP) to form thiamine monophosphate (TMP).</text>
</comment>
<comment type="catalytic activity">
    <reaction evidence="1">
        <text>2-[(2R,5Z)-2-carboxy-4-methylthiazol-5(2H)-ylidene]ethyl phosphate + 4-amino-2-methyl-5-(diphosphooxymethyl)pyrimidine + 2 H(+) = thiamine phosphate + CO2 + diphosphate</text>
        <dbReference type="Rhea" id="RHEA:47844"/>
        <dbReference type="ChEBI" id="CHEBI:15378"/>
        <dbReference type="ChEBI" id="CHEBI:16526"/>
        <dbReference type="ChEBI" id="CHEBI:33019"/>
        <dbReference type="ChEBI" id="CHEBI:37575"/>
        <dbReference type="ChEBI" id="CHEBI:57841"/>
        <dbReference type="ChEBI" id="CHEBI:62899"/>
        <dbReference type="EC" id="2.5.1.3"/>
    </reaction>
</comment>
<comment type="catalytic activity">
    <reaction evidence="1">
        <text>2-(2-carboxy-4-methylthiazol-5-yl)ethyl phosphate + 4-amino-2-methyl-5-(diphosphooxymethyl)pyrimidine + 2 H(+) = thiamine phosphate + CO2 + diphosphate</text>
        <dbReference type="Rhea" id="RHEA:47848"/>
        <dbReference type="ChEBI" id="CHEBI:15378"/>
        <dbReference type="ChEBI" id="CHEBI:16526"/>
        <dbReference type="ChEBI" id="CHEBI:33019"/>
        <dbReference type="ChEBI" id="CHEBI:37575"/>
        <dbReference type="ChEBI" id="CHEBI:57841"/>
        <dbReference type="ChEBI" id="CHEBI:62890"/>
        <dbReference type="EC" id="2.5.1.3"/>
    </reaction>
</comment>
<comment type="catalytic activity">
    <reaction evidence="1">
        <text>4-methyl-5-(2-phosphooxyethyl)-thiazole + 4-amino-2-methyl-5-(diphosphooxymethyl)pyrimidine + H(+) = thiamine phosphate + diphosphate</text>
        <dbReference type="Rhea" id="RHEA:22328"/>
        <dbReference type="ChEBI" id="CHEBI:15378"/>
        <dbReference type="ChEBI" id="CHEBI:33019"/>
        <dbReference type="ChEBI" id="CHEBI:37575"/>
        <dbReference type="ChEBI" id="CHEBI:57841"/>
        <dbReference type="ChEBI" id="CHEBI:58296"/>
        <dbReference type="EC" id="2.5.1.3"/>
    </reaction>
</comment>
<comment type="cofactor">
    <cofactor evidence="1">
        <name>Mg(2+)</name>
        <dbReference type="ChEBI" id="CHEBI:18420"/>
    </cofactor>
    <text evidence="1">Binds 1 Mg(2+) ion per subunit.</text>
</comment>
<comment type="pathway">
    <text evidence="1">Cofactor biosynthesis; thiamine diphosphate biosynthesis; thiamine phosphate from 4-amino-2-methyl-5-diphosphomethylpyrimidine and 4-methyl-5-(2-phosphoethyl)-thiazole: step 1/1.</text>
</comment>
<comment type="similarity">
    <text evidence="1">Belongs to the thiamine-phosphate synthase family.</text>
</comment>